<protein>
    <recommendedName>
        <fullName>Capsid protein</fullName>
        <shortName>CP</shortName>
    </recommendedName>
    <alternativeName>
        <fullName>Coat protein</fullName>
    </alternativeName>
</protein>
<comment type="function">
    <text evidence="1">Capsid protein. Probably binds RNA and plays a role in packaging (By similarity).</text>
</comment>
<comment type="subcellular location">
    <subcellularLocation>
        <location evidence="3">Virion</location>
    </subcellularLocation>
</comment>
<comment type="domain">
    <text evidence="1">The N-terminal arginine-rich stretch does not seem to be the major RNA-binding region that allows formation of an infectious ribonucleoprotein complex.</text>
</comment>
<comment type="similarity">
    <text evidence="3">Belongs to the cucumovirus capsid protein family.</text>
</comment>
<evidence type="ECO:0000250" key="1"/>
<evidence type="ECO:0000256" key="2">
    <source>
        <dbReference type="SAM" id="MobiDB-lite"/>
    </source>
</evidence>
<evidence type="ECO:0000305" key="3"/>
<organism>
    <name type="scientific">Cucumber mosaic virus (strain Trk7)</name>
    <name type="common">CMV</name>
    <dbReference type="NCBI Taxonomy" id="117127"/>
    <lineage>
        <taxon>Viruses</taxon>
        <taxon>Riboviria</taxon>
        <taxon>Orthornavirae</taxon>
        <taxon>Kitrinoviricota</taxon>
        <taxon>Alsuviricetes</taxon>
        <taxon>Martellivirales</taxon>
        <taxon>Bromoviridae</taxon>
        <taxon>Cucumovirus</taxon>
        <taxon>Cucumber mosaic virus</taxon>
    </lineage>
</organism>
<name>CAPSD_CMVTR</name>
<feature type="chain" id="PRO_0000083220" description="Capsid protein">
    <location>
        <begin position="1"/>
        <end position="218"/>
    </location>
</feature>
<feature type="region of interest" description="Disordered" evidence="2">
    <location>
        <begin position="1"/>
        <end position="31"/>
    </location>
</feature>
<feature type="compositionally biased region" description="Basic residues" evidence="2">
    <location>
        <begin position="12"/>
        <end position="22"/>
    </location>
</feature>
<feature type="modified residue" description="N-acetylmethionine; by host" evidence="1">
    <location>
        <position position="1"/>
    </location>
</feature>
<dbReference type="EMBL" id="L15336">
    <property type="protein sequence ID" value="AAA20884.1"/>
    <property type="molecule type" value="mRNA"/>
</dbReference>
<dbReference type="SMR" id="Q83253"/>
<dbReference type="GO" id="GO:1990904">
    <property type="term" value="C:ribonucleoprotein complex"/>
    <property type="evidence" value="ECO:0007669"/>
    <property type="project" value="UniProtKB-KW"/>
</dbReference>
<dbReference type="GO" id="GO:0039617">
    <property type="term" value="C:T=3 icosahedral viral capsid"/>
    <property type="evidence" value="ECO:0007669"/>
    <property type="project" value="UniProtKB-KW"/>
</dbReference>
<dbReference type="GO" id="GO:0019013">
    <property type="term" value="C:viral nucleocapsid"/>
    <property type="evidence" value="ECO:0007669"/>
    <property type="project" value="UniProtKB-KW"/>
</dbReference>
<dbReference type="GO" id="GO:0003723">
    <property type="term" value="F:RNA binding"/>
    <property type="evidence" value="ECO:0007669"/>
    <property type="project" value="UniProtKB-KW"/>
</dbReference>
<dbReference type="GO" id="GO:0005198">
    <property type="term" value="F:structural molecule activity"/>
    <property type="evidence" value="ECO:0007669"/>
    <property type="project" value="InterPro"/>
</dbReference>
<dbReference type="Gene3D" id="2.60.120.530">
    <property type="entry name" value="Cucumovirus coat protein, subunit A"/>
    <property type="match status" value="1"/>
</dbReference>
<dbReference type="InterPro" id="IPR000247">
    <property type="entry name" value="Cucumovirus_coat"/>
</dbReference>
<dbReference type="InterPro" id="IPR037137">
    <property type="entry name" value="Cucumovirus_coat_Asu_sf"/>
</dbReference>
<dbReference type="Pfam" id="PF00760">
    <property type="entry name" value="Cucumo_coat"/>
    <property type="match status" value="1"/>
</dbReference>
<dbReference type="PRINTS" id="PR00222">
    <property type="entry name" value="CUCUMOCOAT"/>
</dbReference>
<dbReference type="SUPFAM" id="SSF88633">
    <property type="entry name" value="Positive stranded ssRNA viruses"/>
    <property type="match status" value="1"/>
</dbReference>
<gene>
    <name type="ORF">ORF3b</name>
</gene>
<sequence>MDKSGSPNASRTSRRRRPRRGSRSASGADAGLRALTQQMLKLNKTLAIGRPTLNHPTFAGSESCKPGYTFTSITLKPPEIEKGSYFGRRLSLPDSVTDYDKKQVSRIQIRINPLPKFDSTVWVTVRKVPSSSDLSVAAITAMFGDGKSPVLVYQYAASGVQANNKLLYNLSEMRADIGDMRKYAVLVYSKDDKLEKDEIVLHVDVEHQRIPISRMLPT</sequence>
<proteinExistence type="evidence at transcript level"/>
<accession>Q83253</accession>
<organismHost>
    <name type="scientific">Cucumis sativus</name>
    <name type="common">Cucumber</name>
    <dbReference type="NCBI Taxonomy" id="3659"/>
</organismHost>
<organismHost>
    <name type="scientific">Solanum lycopersicum</name>
    <name type="common">Tomato</name>
    <name type="synonym">Lycopersicon esculentum</name>
    <dbReference type="NCBI Taxonomy" id="4081"/>
</organismHost>
<organismHost>
    <name type="scientific">Spinacia oleracea</name>
    <name type="common">Spinach</name>
    <dbReference type="NCBI Taxonomy" id="3562"/>
</organismHost>
<keyword id="KW-0007">Acetylation</keyword>
<keyword id="KW-0167">Capsid protein</keyword>
<keyword id="KW-0687">Ribonucleoprotein</keyword>
<keyword id="KW-0694">RNA-binding</keyword>
<keyword id="KW-1142">T=3 icosahedral capsid protein</keyword>
<keyword id="KW-0543">Viral nucleoprotein</keyword>
<keyword id="KW-0946">Virion</keyword>
<reference key="1">
    <citation type="journal article" date="1994" name="Virus Res.">
        <title>Complete nucleotide sequence of the RNA 3 from subgroup II of cucumber mosaic virus (CMV) strain: Trk7.</title>
        <authorList>
            <person name="Salanki K."/>
            <person name="Thole V."/>
            <person name="Balazs E."/>
            <person name="Burgyan J."/>
        </authorList>
    </citation>
    <scope>NUCLEOTIDE SEQUENCE [MRNA]</scope>
</reference>